<organism>
    <name type="scientific">Danio rerio</name>
    <name type="common">Zebrafish</name>
    <name type="synonym">Brachydanio rerio</name>
    <dbReference type="NCBI Taxonomy" id="7955"/>
    <lineage>
        <taxon>Eukaryota</taxon>
        <taxon>Metazoa</taxon>
        <taxon>Chordata</taxon>
        <taxon>Craniata</taxon>
        <taxon>Vertebrata</taxon>
        <taxon>Euteleostomi</taxon>
        <taxon>Actinopterygii</taxon>
        <taxon>Neopterygii</taxon>
        <taxon>Teleostei</taxon>
        <taxon>Ostariophysi</taxon>
        <taxon>Cypriniformes</taxon>
        <taxon>Danionidae</taxon>
        <taxon>Danioninae</taxon>
        <taxon>Danio</taxon>
    </lineage>
</organism>
<feature type="chain" id="PRO_0000391908" description="Protein Jumonji">
    <location>
        <begin position="1"/>
        <end position="1319"/>
    </location>
</feature>
<feature type="domain" description="JmjN" evidence="3">
    <location>
        <begin position="607"/>
        <end position="648"/>
    </location>
</feature>
<feature type="domain" description="ARID" evidence="2">
    <location>
        <begin position="671"/>
        <end position="779"/>
    </location>
</feature>
<feature type="domain" description="JmjC" evidence="4">
    <location>
        <begin position="954"/>
        <end position="1118"/>
    </location>
</feature>
<feature type="region of interest" description="Disordered" evidence="5">
    <location>
        <begin position="1"/>
        <end position="23"/>
    </location>
</feature>
<feature type="region of interest" description="Disordered" evidence="5">
    <location>
        <begin position="50"/>
        <end position="130"/>
    </location>
</feature>
<feature type="region of interest" description="Disordered" evidence="5">
    <location>
        <begin position="173"/>
        <end position="265"/>
    </location>
</feature>
<feature type="region of interest" description="Disordered" evidence="5">
    <location>
        <begin position="351"/>
        <end position="382"/>
    </location>
</feature>
<feature type="region of interest" description="Disordered" evidence="5">
    <location>
        <begin position="396"/>
        <end position="478"/>
    </location>
</feature>
<feature type="region of interest" description="Disordered" evidence="5">
    <location>
        <begin position="499"/>
        <end position="537"/>
    </location>
</feature>
<feature type="region of interest" description="Disordered" evidence="5">
    <location>
        <begin position="549"/>
        <end position="599"/>
    </location>
</feature>
<feature type="region of interest" description="Disordered" evidence="5">
    <location>
        <begin position="798"/>
        <end position="818"/>
    </location>
</feature>
<feature type="short sequence motif" description="Nuclear localization signal" evidence="1">
    <location>
        <begin position="96"/>
        <end position="102"/>
    </location>
</feature>
<feature type="short sequence motif" description="GSGFP motif">
    <location>
        <begin position="944"/>
        <end position="948"/>
    </location>
</feature>
<feature type="compositionally biased region" description="Basic residues" evidence="5">
    <location>
        <begin position="1"/>
        <end position="11"/>
    </location>
</feature>
<feature type="compositionally biased region" description="Polar residues" evidence="5">
    <location>
        <begin position="61"/>
        <end position="70"/>
    </location>
</feature>
<feature type="compositionally biased region" description="Basic and acidic residues" evidence="5">
    <location>
        <begin position="74"/>
        <end position="88"/>
    </location>
</feature>
<feature type="compositionally biased region" description="Basic residues" evidence="5">
    <location>
        <begin position="98"/>
        <end position="107"/>
    </location>
</feature>
<feature type="compositionally biased region" description="Polar residues" evidence="5">
    <location>
        <begin position="109"/>
        <end position="121"/>
    </location>
</feature>
<feature type="compositionally biased region" description="Acidic residues" evidence="5">
    <location>
        <begin position="173"/>
        <end position="185"/>
    </location>
</feature>
<feature type="compositionally biased region" description="Polar residues" evidence="5">
    <location>
        <begin position="191"/>
        <end position="200"/>
    </location>
</feature>
<feature type="compositionally biased region" description="Basic and acidic residues" evidence="5">
    <location>
        <begin position="221"/>
        <end position="251"/>
    </location>
</feature>
<feature type="compositionally biased region" description="Polar residues" evidence="5">
    <location>
        <begin position="372"/>
        <end position="382"/>
    </location>
</feature>
<feature type="compositionally biased region" description="Basic and acidic residues" evidence="5">
    <location>
        <begin position="413"/>
        <end position="424"/>
    </location>
</feature>
<feature type="compositionally biased region" description="Pro residues" evidence="5">
    <location>
        <begin position="505"/>
        <end position="515"/>
    </location>
</feature>
<feature type="compositionally biased region" description="Low complexity" evidence="5">
    <location>
        <begin position="516"/>
        <end position="525"/>
    </location>
</feature>
<feature type="compositionally biased region" description="Low complexity" evidence="5">
    <location>
        <begin position="554"/>
        <end position="570"/>
    </location>
</feature>
<feature type="compositionally biased region" description="Basic and acidic residues" evidence="5">
    <location>
        <begin position="583"/>
        <end position="598"/>
    </location>
</feature>
<feature type="compositionally biased region" description="Basic and acidic residues" evidence="5">
    <location>
        <begin position="798"/>
        <end position="811"/>
    </location>
</feature>
<reference key="1">
    <citation type="journal article" date="2013" name="Nature">
        <title>The zebrafish reference genome sequence and its relationship to the human genome.</title>
        <authorList>
            <person name="Howe K."/>
            <person name="Clark M.D."/>
            <person name="Torroja C.F."/>
            <person name="Torrance J."/>
            <person name="Berthelot C."/>
            <person name="Muffato M."/>
            <person name="Collins J.E."/>
            <person name="Humphray S."/>
            <person name="McLaren K."/>
            <person name="Matthews L."/>
            <person name="McLaren S."/>
            <person name="Sealy I."/>
            <person name="Caccamo M."/>
            <person name="Churcher C."/>
            <person name="Scott C."/>
            <person name="Barrett J.C."/>
            <person name="Koch R."/>
            <person name="Rauch G.J."/>
            <person name="White S."/>
            <person name="Chow W."/>
            <person name="Kilian B."/>
            <person name="Quintais L.T."/>
            <person name="Guerra-Assuncao J.A."/>
            <person name="Zhou Y."/>
            <person name="Gu Y."/>
            <person name="Yen J."/>
            <person name="Vogel J.H."/>
            <person name="Eyre T."/>
            <person name="Redmond S."/>
            <person name="Banerjee R."/>
            <person name="Chi J."/>
            <person name="Fu B."/>
            <person name="Langley E."/>
            <person name="Maguire S.F."/>
            <person name="Laird G.K."/>
            <person name="Lloyd D."/>
            <person name="Kenyon E."/>
            <person name="Donaldson S."/>
            <person name="Sehra H."/>
            <person name="Almeida-King J."/>
            <person name="Loveland J."/>
            <person name="Trevanion S."/>
            <person name="Jones M."/>
            <person name="Quail M."/>
            <person name="Willey D."/>
            <person name="Hunt A."/>
            <person name="Burton J."/>
            <person name="Sims S."/>
            <person name="McLay K."/>
            <person name="Plumb B."/>
            <person name="Davis J."/>
            <person name="Clee C."/>
            <person name="Oliver K."/>
            <person name="Clark R."/>
            <person name="Riddle C."/>
            <person name="Elliot D."/>
            <person name="Threadgold G."/>
            <person name="Harden G."/>
            <person name="Ware D."/>
            <person name="Begum S."/>
            <person name="Mortimore B."/>
            <person name="Kerry G."/>
            <person name="Heath P."/>
            <person name="Phillimore B."/>
            <person name="Tracey A."/>
            <person name="Corby N."/>
            <person name="Dunn M."/>
            <person name="Johnson C."/>
            <person name="Wood J."/>
            <person name="Clark S."/>
            <person name="Pelan S."/>
            <person name="Griffiths G."/>
            <person name="Smith M."/>
            <person name="Glithero R."/>
            <person name="Howden P."/>
            <person name="Barker N."/>
            <person name="Lloyd C."/>
            <person name="Stevens C."/>
            <person name="Harley J."/>
            <person name="Holt K."/>
            <person name="Panagiotidis G."/>
            <person name="Lovell J."/>
            <person name="Beasley H."/>
            <person name="Henderson C."/>
            <person name="Gordon D."/>
            <person name="Auger K."/>
            <person name="Wright D."/>
            <person name="Collins J."/>
            <person name="Raisen C."/>
            <person name="Dyer L."/>
            <person name="Leung K."/>
            <person name="Robertson L."/>
            <person name="Ambridge K."/>
            <person name="Leongamornlert D."/>
            <person name="McGuire S."/>
            <person name="Gilderthorp R."/>
            <person name="Griffiths C."/>
            <person name="Manthravadi D."/>
            <person name="Nichol S."/>
            <person name="Barker G."/>
            <person name="Whitehead S."/>
            <person name="Kay M."/>
            <person name="Brown J."/>
            <person name="Murnane C."/>
            <person name="Gray E."/>
            <person name="Humphries M."/>
            <person name="Sycamore N."/>
            <person name="Barker D."/>
            <person name="Saunders D."/>
            <person name="Wallis J."/>
            <person name="Babbage A."/>
            <person name="Hammond S."/>
            <person name="Mashreghi-Mohammadi M."/>
            <person name="Barr L."/>
            <person name="Martin S."/>
            <person name="Wray P."/>
            <person name="Ellington A."/>
            <person name="Matthews N."/>
            <person name="Ellwood M."/>
            <person name="Woodmansey R."/>
            <person name="Clark G."/>
            <person name="Cooper J."/>
            <person name="Tromans A."/>
            <person name="Grafham D."/>
            <person name="Skuce C."/>
            <person name="Pandian R."/>
            <person name="Andrews R."/>
            <person name="Harrison E."/>
            <person name="Kimberley A."/>
            <person name="Garnett J."/>
            <person name="Fosker N."/>
            <person name="Hall R."/>
            <person name="Garner P."/>
            <person name="Kelly D."/>
            <person name="Bird C."/>
            <person name="Palmer S."/>
            <person name="Gehring I."/>
            <person name="Berger A."/>
            <person name="Dooley C.M."/>
            <person name="Ersan-Urun Z."/>
            <person name="Eser C."/>
            <person name="Geiger H."/>
            <person name="Geisler M."/>
            <person name="Karotki L."/>
            <person name="Kirn A."/>
            <person name="Konantz J."/>
            <person name="Konantz M."/>
            <person name="Oberlander M."/>
            <person name="Rudolph-Geiger S."/>
            <person name="Teucke M."/>
            <person name="Lanz C."/>
            <person name="Raddatz G."/>
            <person name="Osoegawa K."/>
            <person name="Zhu B."/>
            <person name="Rapp A."/>
            <person name="Widaa S."/>
            <person name="Langford C."/>
            <person name="Yang F."/>
            <person name="Schuster S.C."/>
            <person name="Carter N.P."/>
            <person name="Harrow J."/>
            <person name="Ning Z."/>
            <person name="Herrero J."/>
            <person name="Searle S.M."/>
            <person name="Enright A."/>
            <person name="Geisler R."/>
            <person name="Plasterk R.H."/>
            <person name="Lee C."/>
            <person name="Westerfield M."/>
            <person name="de Jong P.J."/>
            <person name="Zon L.I."/>
            <person name="Postlethwait J.H."/>
            <person name="Nusslein-Volhard C."/>
            <person name="Hubbard T.J."/>
            <person name="Roest Crollius H."/>
            <person name="Rogers J."/>
            <person name="Stemple D.L."/>
        </authorList>
    </citation>
    <scope>NUCLEOTIDE SEQUENCE [LARGE SCALE GENOMIC DNA]</scope>
    <source>
        <strain>Tuebingen</strain>
    </source>
</reference>
<gene>
    <name type="primary">jarid2b</name>
    <name type="synonym">jmj</name>
    <name type="ORF">si:dkey-211c3.1</name>
</gene>
<proteinExistence type="inferred from homology"/>
<protein>
    <recommendedName>
        <fullName>Protein Jumonji</fullName>
    </recommendedName>
    <alternativeName>
        <fullName>Jumonji/ARID domain-containing protein 2</fullName>
    </alternativeName>
</protein>
<keyword id="KW-0156">Chromatin regulator</keyword>
<keyword id="KW-0217">Developmental protein</keyword>
<keyword id="KW-0221">Differentiation</keyword>
<keyword id="KW-0539">Nucleus</keyword>
<keyword id="KW-1185">Reference proteome</keyword>
<keyword id="KW-0678">Repressor</keyword>
<keyword id="KW-0804">Transcription</keyword>
<keyword id="KW-0805">Transcription regulation</keyword>
<accession>Q1LVC2</accession>
<dbReference type="EMBL" id="BX842609">
    <property type="protein sequence ID" value="CAK04931.1"/>
    <property type="status" value="ALT_SEQ"/>
    <property type="molecule type" value="Genomic_DNA"/>
</dbReference>
<dbReference type="EMBL" id="BX890540">
    <property type="protein sequence ID" value="CAK04931.1"/>
    <property type="status" value="JOINED"/>
    <property type="molecule type" value="Genomic_DNA"/>
</dbReference>
<dbReference type="EMBL" id="BX890540">
    <property type="protein sequence ID" value="CAK05400.1"/>
    <property type="status" value="ALT_SEQ"/>
    <property type="molecule type" value="Genomic_DNA"/>
</dbReference>
<dbReference type="EMBL" id="BX842609">
    <property type="protein sequence ID" value="CAK05400.1"/>
    <property type="status" value="JOINED"/>
    <property type="molecule type" value="Genomic_DNA"/>
</dbReference>
<dbReference type="RefSeq" id="NP_001189388.1">
    <property type="nucleotide sequence ID" value="NM_001202459.1"/>
</dbReference>
<dbReference type="SMR" id="Q1LVC2"/>
<dbReference type="FunCoup" id="Q1LVC2">
    <property type="interactions" value="1457"/>
</dbReference>
<dbReference type="STRING" id="7955.ENSDARP00000084269"/>
<dbReference type="PaxDb" id="7955-ENSDARP00000114402"/>
<dbReference type="Ensembl" id="ENSDART00000089836">
    <property type="protein sequence ID" value="ENSDARP00000084269"/>
    <property type="gene ID" value="ENSDARG00000062268"/>
</dbReference>
<dbReference type="GeneID" id="558456"/>
<dbReference type="KEGG" id="dre:558456"/>
<dbReference type="AGR" id="ZFIN:ZDB-GENE-060503-246"/>
<dbReference type="CTD" id="558456"/>
<dbReference type="ZFIN" id="ZDB-GENE-060503-246">
    <property type="gene designation" value="jarid2b"/>
</dbReference>
<dbReference type="eggNOG" id="KOG1246">
    <property type="taxonomic scope" value="Eukaryota"/>
</dbReference>
<dbReference type="InParanoid" id="Q1LVC2"/>
<dbReference type="OMA" id="TGADCIX"/>
<dbReference type="OrthoDB" id="8951118at2759"/>
<dbReference type="PhylomeDB" id="Q1LVC2"/>
<dbReference type="TreeFam" id="TF323264"/>
<dbReference type="Reactome" id="R-DRE-212300">
    <property type="pathway name" value="PRC2 methylates histones and DNA"/>
</dbReference>
<dbReference type="PRO" id="PR:Q1LVC2"/>
<dbReference type="Proteomes" id="UP000000437">
    <property type="component" value="Chromosome 19"/>
</dbReference>
<dbReference type="Bgee" id="ENSDARG00000062268">
    <property type="expression patterns" value="Expressed in blastula and 12 other cell types or tissues"/>
</dbReference>
<dbReference type="ExpressionAtlas" id="Q1LVC2">
    <property type="expression patterns" value="baseline"/>
</dbReference>
<dbReference type="GO" id="GO:0000785">
    <property type="term" value="C:chromatin"/>
    <property type="evidence" value="ECO:0000318"/>
    <property type="project" value="GO_Central"/>
</dbReference>
<dbReference type="GO" id="GO:0035098">
    <property type="term" value="C:ESC/E(Z) complex"/>
    <property type="evidence" value="ECO:0000250"/>
    <property type="project" value="UniProtKB"/>
</dbReference>
<dbReference type="GO" id="GO:0035097">
    <property type="term" value="C:histone methyltransferase complex"/>
    <property type="evidence" value="ECO:0000250"/>
    <property type="project" value="UniProtKB"/>
</dbReference>
<dbReference type="GO" id="GO:0005634">
    <property type="term" value="C:nucleus"/>
    <property type="evidence" value="ECO:0000318"/>
    <property type="project" value="GO_Central"/>
</dbReference>
<dbReference type="GO" id="GO:0003682">
    <property type="term" value="F:chromatin binding"/>
    <property type="evidence" value="ECO:0000250"/>
    <property type="project" value="UniProtKB"/>
</dbReference>
<dbReference type="GO" id="GO:0003677">
    <property type="term" value="F:DNA binding"/>
    <property type="evidence" value="ECO:0007669"/>
    <property type="project" value="InterPro"/>
</dbReference>
<dbReference type="GO" id="GO:0006338">
    <property type="term" value="P:chromatin remodeling"/>
    <property type="evidence" value="ECO:0000318"/>
    <property type="project" value="GO_Central"/>
</dbReference>
<dbReference type="GO" id="GO:0010468">
    <property type="term" value="P:regulation of gene expression"/>
    <property type="evidence" value="ECO:0000318"/>
    <property type="project" value="GO_Central"/>
</dbReference>
<dbReference type="GO" id="GO:0048863">
    <property type="term" value="P:stem cell differentiation"/>
    <property type="evidence" value="ECO:0000250"/>
    <property type="project" value="UniProtKB"/>
</dbReference>
<dbReference type="CDD" id="cd16870">
    <property type="entry name" value="ARID_JARD2"/>
    <property type="match status" value="1"/>
</dbReference>
<dbReference type="FunFam" id="2.60.120.650:FF:000007">
    <property type="entry name" value="Jumonji, AT rich interactive domain 2"/>
    <property type="match status" value="1"/>
</dbReference>
<dbReference type="Gene3D" id="1.10.150.60">
    <property type="entry name" value="ARID DNA-binding domain"/>
    <property type="match status" value="1"/>
</dbReference>
<dbReference type="Gene3D" id="2.60.120.650">
    <property type="entry name" value="Cupin"/>
    <property type="match status" value="1"/>
</dbReference>
<dbReference type="InterPro" id="IPR001606">
    <property type="entry name" value="ARID_dom"/>
</dbReference>
<dbReference type="InterPro" id="IPR036431">
    <property type="entry name" value="ARID_dom_sf"/>
</dbReference>
<dbReference type="InterPro" id="IPR003347">
    <property type="entry name" value="JmjC_dom"/>
</dbReference>
<dbReference type="InterPro" id="IPR003349">
    <property type="entry name" value="JmjN"/>
</dbReference>
<dbReference type="InterPro" id="IPR004198">
    <property type="entry name" value="Znf_C5HC2"/>
</dbReference>
<dbReference type="PANTHER" id="PTHR10694">
    <property type="entry name" value="LYSINE-SPECIFIC DEMETHYLASE"/>
    <property type="match status" value="1"/>
</dbReference>
<dbReference type="PANTHER" id="PTHR10694:SF113">
    <property type="entry name" value="PROTEIN JUMONJI"/>
    <property type="match status" value="1"/>
</dbReference>
<dbReference type="Pfam" id="PF01388">
    <property type="entry name" value="ARID"/>
    <property type="match status" value="1"/>
</dbReference>
<dbReference type="Pfam" id="PF02373">
    <property type="entry name" value="JmjC"/>
    <property type="match status" value="1"/>
</dbReference>
<dbReference type="Pfam" id="PF02375">
    <property type="entry name" value="JmjN"/>
    <property type="match status" value="1"/>
</dbReference>
<dbReference type="Pfam" id="PF02928">
    <property type="entry name" value="zf-C5HC2"/>
    <property type="match status" value="1"/>
</dbReference>
<dbReference type="SMART" id="SM01014">
    <property type="entry name" value="ARID"/>
    <property type="match status" value="1"/>
</dbReference>
<dbReference type="SMART" id="SM00501">
    <property type="entry name" value="BRIGHT"/>
    <property type="match status" value="1"/>
</dbReference>
<dbReference type="SMART" id="SM00558">
    <property type="entry name" value="JmjC"/>
    <property type="match status" value="1"/>
</dbReference>
<dbReference type="SMART" id="SM00545">
    <property type="entry name" value="JmjN"/>
    <property type="match status" value="1"/>
</dbReference>
<dbReference type="SUPFAM" id="SSF46774">
    <property type="entry name" value="ARID-like"/>
    <property type="match status" value="1"/>
</dbReference>
<dbReference type="SUPFAM" id="SSF51197">
    <property type="entry name" value="Clavaminate synthase-like"/>
    <property type="match status" value="1"/>
</dbReference>
<dbReference type="PROSITE" id="PS51011">
    <property type="entry name" value="ARID"/>
    <property type="match status" value="1"/>
</dbReference>
<dbReference type="PROSITE" id="PS51184">
    <property type="entry name" value="JMJC"/>
    <property type="match status" value="1"/>
</dbReference>
<dbReference type="PROSITE" id="PS51183">
    <property type="entry name" value="JMJN"/>
    <property type="match status" value="1"/>
</dbReference>
<sequence length="1319" mass="148226">MSKERPKRNIIQKKYDDNDGMPWSEERVVRKVLYLSLKEFKSAQKRQLCDGIDDEGKGPNASLSNGQLNGSKGGHKEDGSRSQRKDGGGEYSVDGPAKKRPRLHAQRKFAQSQPNSPSNTPVKMADPSLPTPLTHITFLSRRKPKTEDFLTFICLRGSPALPSNMAYFGCSQDEEDLEDEDEIEEEKAPSVASTSCQSTPKKGKPHGKINGLVLNGHKVHKDKELTPRSKARESSVGRDRSERCDESEISHKHTAATAKSHNTNGHNYRRAAEELRKQVSKVNGLTRASSVGTHKASGKKQKDFRLPSKTVKYTATVSKGHVTYTKAKRELVKKAKLNHSKHGASAGLRAYSNNHHHNSHHATSNGHGRPQLSHSGKAQSINAKTRKQVLLSNGVHKMTNGSRLNGRLNGRHSAREEEVVDRPVRQGLRNSKRRSDAMTLLGAVTESEETKTKQQTTEVKKAKVQPSPLETRSKKALNQFKSPNIVTIAHSITEMAASPIQKTGPAPPPSPPAAPASPSMPQNPAIPEPARQRPKRASAGKLMFIRKAQQRAQTNPTLNRTTSTTSASKSFKPAEPTHTPPPRLDRDRERERERERSRARYAALGDVPIFKPSSREFQDPLVYLDSFREQVESCGLCRVLPPTDWRPECKLNDEMRFVTQVQRIHKLGRRWGPNVQKLACIKKHLKSQGISMDQPPVIGKSFKSSAFRSAFVCIGGCEVDLARFSELVCDLGGMQQVMDLKKWSRLADLLRIPKSAQDRLAKLQEAYLQFLLSYDLLSPEELQRLEQEVRAEKEALERKRGPLEGHSDNGHHSLALPRYEPKNGLNGLSHRNGFRNHHKEPDIQRQAGRRRLFAQEKKGEKVECEETEEEMEDEGVLSDQHKCIYKGRSVSLTTFYRIARNTMMMYFNKEPGAAEVEQDYWRIVEQRDCHVAVHYGKVDTNTHGSGFPVGKSEPFSKHGWNLTVLPNNSGSILRHLGAVPGVTIPWLNIGMVFSTSCWSQDQNRLPYIDYLHTGADCIWYSIPAEEKTKLDKVVHTLLQANGTPGLEMLEKNVMISPEVLCREGIKVHRTVQQSGQFVVVFPGAFVSRVCCGYSVSETVHFATPQWMNLGYEAAKDLKCRRIAKPFSMEKLLYQIATAEAKRENRLVLSTISSLLKDLRNIEMKQRQELYEAGLLSSARYCTHDHNQSPADTRKKPRKWLALESSERRCQMCQHLCYLSMVVQENENVVFCLECALHYVEKHKNCRGLKMMYRYDEEQINSLVNQVCGKALVRSGSEVCNGSSPIKPPAKRGPRKRESMKITLIPLPTHPSKSAAAAVS</sequence>
<evidence type="ECO:0000250" key="1"/>
<evidence type="ECO:0000255" key="2">
    <source>
        <dbReference type="PROSITE-ProRule" id="PRU00355"/>
    </source>
</evidence>
<evidence type="ECO:0000255" key="3">
    <source>
        <dbReference type="PROSITE-ProRule" id="PRU00537"/>
    </source>
</evidence>
<evidence type="ECO:0000255" key="4">
    <source>
        <dbReference type="PROSITE-ProRule" id="PRU00538"/>
    </source>
</evidence>
<evidence type="ECO:0000256" key="5">
    <source>
        <dbReference type="SAM" id="MobiDB-lite"/>
    </source>
</evidence>
<evidence type="ECO:0000305" key="6"/>
<comment type="function">
    <text evidence="1">Regulator of histone methyltransferase complexes that plays an essential role in embryonic development. Acts by modulating histone methyltransferase activity and promoting the recruitment of histone methyltransferase complexes to their target genes. Binds DNA and mediates the recruitment of the PRC2 complex to target genes in embryonic stem cells. Does not have histone demethylase activity but regulates activity of various histone methyltransferase complexes. In embryonic stem cells, it associates with the PRC2 complex and inhibits trimethylation of 'Lys-27' of histone H3 (H3K27me3) by the PRC2 complex, thereby playing a key role in differentiation of embryonic stem cells and normal development (By similarity).</text>
</comment>
<comment type="subunit">
    <text evidence="1">Associates with the PRC2 complex.</text>
</comment>
<comment type="subcellular location">
    <subcellularLocation>
        <location>Nucleus</location>
    </subcellularLocation>
    <text>Colocalizes with the PRC2 complex on chromatin.</text>
</comment>
<comment type="domain">
    <text evidence="1">The ARID domain is required to target the PRC2 complex to its target genes.</text>
</comment>
<comment type="similarity">
    <text evidence="6">Belongs to the JARID2 family.</text>
</comment>
<comment type="sequence caution" evidence="6">
    <conflict type="erroneous gene model prediction">
        <sequence resource="EMBL-CDS" id="CAK04931"/>
    </conflict>
</comment>
<comment type="sequence caution" evidence="6">
    <conflict type="erroneous gene model prediction">
        <sequence resource="EMBL-CDS" id="CAK05400"/>
    </conflict>
</comment>
<name>JARD2_DANRE</name>